<sequence>MKVGLKMLHDQVLIRPHEEKDGAGGIYIPDSAKKKPTMGLVVAVGAGAKNSNGTFQPVCVKEGDIVLYRKWAGSEVEHDGVEYVVMKETDIIAIKEGK</sequence>
<name>CH10_NEOSM</name>
<protein>
    <recommendedName>
        <fullName evidence="1">Co-chaperonin GroES</fullName>
    </recommendedName>
    <alternativeName>
        <fullName evidence="1">10 kDa chaperonin</fullName>
    </alternativeName>
    <alternativeName>
        <fullName evidence="1">Chaperonin-10</fullName>
        <shortName evidence="1">Cpn10</shortName>
    </alternativeName>
</protein>
<proteinExistence type="inferred from homology"/>
<gene>
    <name evidence="1" type="primary">groES</name>
    <name evidence="1" type="synonym">groS</name>
    <name type="ordered locus">NSE_0643</name>
</gene>
<evidence type="ECO:0000255" key="1">
    <source>
        <dbReference type="HAMAP-Rule" id="MF_00580"/>
    </source>
</evidence>
<dbReference type="EMBL" id="CP000237">
    <property type="protein sequence ID" value="ABD46286.1"/>
    <property type="molecule type" value="Genomic_DNA"/>
</dbReference>
<dbReference type="RefSeq" id="WP_011452027.1">
    <property type="nucleotide sequence ID" value="NC_007798.1"/>
</dbReference>
<dbReference type="SMR" id="Q2GDC5"/>
<dbReference type="STRING" id="222891.NSE_0643"/>
<dbReference type="KEGG" id="nse:NSE_0643"/>
<dbReference type="eggNOG" id="COG0234">
    <property type="taxonomic scope" value="Bacteria"/>
</dbReference>
<dbReference type="HOGENOM" id="CLU_132825_1_0_5"/>
<dbReference type="OrthoDB" id="9806791at2"/>
<dbReference type="Proteomes" id="UP000001942">
    <property type="component" value="Chromosome"/>
</dbReference>
<dbReference type="GO" id="GO:0005737">
    <property type="term" value="C:cytoplasm"/>
    <property type="evidence" value="ECO:0007669"/>
    <property type="project" value="UniProtKB-SubCell"/>
</dbReference>
<dbReference type="GO" id="GO:0005524">
    <property type="term" value="F:ATP binding"/>
    <property type="evidence" value="ECO:0007669"/>
    <property type="project" value="InterPro"/>
</dbReference>
<dbReference type="GO" id="GO:0046872">
    <property type="term" value="F:metal ion binding"/>
    <property type="evidence" value="ECO:0007669"/>
    <property type="project" value="TreeGrafter"/>
</dbReference>
<dbReference type="GO" id="GO:0044183">
    <property type="term" value="F:protein folding chaperone"/>
    <property type="evidence" value="ECO:0007669"/>
    <property type="project" value="InterPro"/>
</dbReference>
<dbReference type="GO" id="GO:0051087">
    <property type="term" value="F:protein-folding chaperone binding"/>
    <property type="evidence" value="ECO:0007669"/>
    <property type="project" value="TreeGrafter"/>
</dbReference>
<dbReference type="GO" id="GO:0051082">
    <property type="term" value="F:unfolded protein binding"/>
    <property type="evidence" value="ECO:0007669"/>
    <property type="project" value="TreeGrafter"/>
</dbReference>
<dbReference type="GO" id="GO:0051085">
    <property type="term" value="P:chaperone cofactor-dependent protein refolding"/>
    <property type="evidence" value="ECO:0007669"/>
    <property type="project" value="TreeGrafter"/>
</dbReference>
<dbReference type="CDD" id="cd00320">
    <property type="entry name" value="cpn10"/>
    <property type="match status" value="1"/>
</dbReference>
<dbReference type="FunFam" id="2.30.33.40:FF:000001">
    <property type="entry name" value="10 kDa chaperonin"/>
    <property type="match status" value="1"/>
</dbReference>
<dbReference type="Gene3D" id="2.30.33.40">
    <property type="entry name" value="GroES chaperonin"/>
    <property type="match status" value="1"/>
</dbReference>
<dbReference type="HAMAP" id="MF_00580">
    <property type="entry name" value="CH10"/>
    <property type="match status" value="1"/>
</dbReference>
<dbReference type="InterPro" id="IPR020818">
    <property type="entry name" value="Chaperonin_GroES"/>
</dbReference>
<dbReference type="InterPro" id="IPR037124">
    <property type="entry name" value="Chaperonin_GroES_sf"/>
</dbReference>
<dbReference type="InterPro" id="IPR011032">
    <property type="entry name" value="GroES-like_sf"/>
</dbReference>
<dbReference type="NCBIfam" id="NF001533">
    <property type="entry name" value="PRK00364.2-4"/>
    <property type="match status" value="1"/>
</dbReference>
<dbReference type="PANTHER" id="PTHR10772">
    <property type="entry name" value="10 KDA HEAT SHOCK PROTEIN"/>
    <property type="match status" value="1"/>
</dbReference>
<dbReference type="PANTHER" id="PTHR10772:SF63">
    <property type="entry name" value="20 KDA CHAPERONIN, CHLOROPLASTIC"/>
    <property type="match status" value="1"/>
</dbReference>
<dbReference type="Pfam" id="PF00166">
    <property type="entry name" value="Cpn10"/>
    <property type="match status" value="1"/>
</dbReference>
<dbReference type="PRINTS" id="PR00297">
    <property type="entry name" value="CHAPERONIN10"/>
</dbReference>
<dbReference type="SMART" id="SM00883">
    <property type="entry name" value="Cpn10"/>
    <property type="match status" value="1"/>
</dbReference>
<dbReference type="SUPFAM" id="SSF50129">
    <property type="entry name" value="GroES-like"/>
    <property type="match status" value="1"/>
</dbReference>
<accession>Q2GDC5</accession>
<reference key="1">
    <citation type="journal article" date="2006" name="PLoS Genet.">
        <title>Comparative genomics of emerging human ehrlichiosis agents.</title>
        <authorList>
            <person name="Dunning Hotopp J.C."/>
            <person name="Lin M."/>
            <person name="Madupu R."/>
            <person name="Crabtree J."/>
            <person name="Angiuoli S.V."/>
            <person name="Eisen J.A."/>
            <person name="Seshadri R."/>
            <person name="Ren Q."/>
            <person name="Wu M."/>
            <person name="Utterback T.R."/>
            <person name="Smith S."/>
            <person name="Lewis M."/>
            <person name="Khouri H."/>
            <person name="Zhang C."/>
            <person name="Niu H."/>
            <person name="Lin Q."/>
            <person name="Ohashi N."/>
            <person name="Zhi N."/>
            <person name="Nelson W.C."/>
            <person name="Brinkac L.M."/>
            <person name="Dodson R.J."/>
            <person name="Rosovitz M.J."/>
            <person name="Sundaram J.P."/>
            <person name="Daugherty S.C."/>
            <person name="Davidsen T."/>
            <person name="Durkin A.S."/>
            <person name="Gwinn M.L."/>
            <person name="Haft D.H."/>
            <person name="Selengut J.D."/>
            <person name="Sullivan S.A."/>
            <person name="Zafar N."/>
            <person name="Zhou L."/>
            <person name="Benahmed F."/>
            <person name="Forberger H."/>
            <person name="Halpin R."/>
            <person name="Mulligan S."/>
            <person name="Robinson J."/>
            <person name="White O."/>
            <person name="Rikihisa Y."/>
            <person name="Tettelin H."/>
        </authorList>
    </citation>
    <scope>NUCLEOTIDE SEQUENCE [LARGE SCALE GENOMIC DNA]</scope>
    <source>
        <strain>ATCC VR-367 / Miyayama</strain>
    </source>
</reference>
<comment type="function">
    <text evidence="1">Together with the chaperonin GroEL, plays an essential role in assisting protein folding. The GroEL-GroES system forms a nano-cage that allows encapsulation of the non-native substrate proteins and provides a physical environment optimized to promote and accelerate protein folding. GroES binds to the apical surface of the GroEL ring, thereby capping the opening of the GroEL channel.</text>
</comment>
<comment type="subunit">
    <text evidence="1">Heptamer of 7 subunits arranged in a ring. Interacts with the chaperonin GroEL.</text>
</comment>
<comment type="subcellular location">
    <subcellularLocation>
        <location evidence="1">Cytoplasm</location>
    </subcellularLocation>
</comment>
<comment type="similarity">
    <text evidence="1">Belongs to the GroES chaperonin family.</text>
</comment>
<organism>
    <name type="scientific">Neorickettsia sennetsu (strain ATCC VR-367 / Miyayama)</name>
    <name type="common">Ehrlichia sennetsu</name>
    <dbReference type="NCBI Taxonomy" id="222891"/>
    <lineage>
        <taxon>Bacteria</taxon>
        <taxon>Pseudomonadati</taxon>
        <taxon>Pseudomonadota</taxon>
        <taxon>Alphaproteobacteria</taxon>
        <taxon>Rickettsiales</taxon>
        <taxon>Anaplasmataceae</taxon>
        <taxon>Neorickettsia</taxon>
    </lineage>
</organism>
<keyword id="KW-0143">Chaperone</keyword>
<keyword id="KW-0963">Cytoplasm</keyword>
<feature type="chain" id="PRO_1000025310" description="Co-chaperonin GroES">
    <location>
        <begin position="1"/>
        <end position="98"/>
    </location>
</feature>